<comment type="function">
    <text evidence="12">May play a role in proteolysis leading to mobilization of nitrogen during senescence and starvation.</text>
</comment>
<comment type="catalytic activity">
    <reaction evidence="12">
        <text>Hydrolysis of proteins, acting as an aminopeptidase (notably, cleaving Arg-|-Xaa bonds) as well as an endopeptidase.</text>
        <dbReference type="EC" id="3.4.22.16"/>
    </reaction>
</comment>
<comment type="subunit">
    <text evidence="10">Interacts with KPI104 and KPI106 (PubMed:23662629). Composed of a mini chain and a large chain. The large chain may be split into heavy and light chain. All chains are held together by disulfide bonds.</text>
</comment>
<comment type="subcellular location">
    <subcellularLocation>
        <location evidence="4">Vacuole</location>
    </subcellularLocation>
    <subcellularLocation>
        <location evidence="1">Lysosome</location>
    </subcellularLocation>
</comment>
<comment type="similarity">
    <text evidence="7 8 9">Belongs to the peptidase C1 family.</text>
</comment>
<comment type="sequence caution" evidence="12">
    <conflict type="erroneous gene model prediction">
        <sequence resource="EMBL-CDS" id="RHN64564"/>
    </conflict>
</comment>
<protein>
    <recommendedName>
        <fullName evidence="12">Pro-cathepsin H</fullName>
    </recommendedName>
    <alternativeName>
        <fullName evidence="11">Cysteine protease</fullName>
    </alternativeName>
    <component>
        <recommendedName>
            <fullName evidence="12">Cathepsin H mini chain</fullName>
        </recommendedName>
    </component>
    <component>
        <recommendedName>
            <fullName evidence="12">Cathepsin H</fullName>
            <ecNumber evidence="12">3.4.22.16</ecNumber>
        </recommendedName>
    </component>
    <component>
        <recommendedName>
            <fullName evidence="12">Cathepsin H heavy chain</fullName>
        </recommendedName>
    </component>
    <component>
        <recommendedName>
            <fullName evidence="12">Cathepsin H light chain</fullName>
        </recommendedName>
    </component>
</protein>
<dbReference type="EC" id="3.4.22.16" evidence="12"/>
<dbReference type="EMBL" id="BT149051">
    <property type="protein sequence ID" value="AFK48845.1"/>
    <property type="molecule type" value="mRNA"/>
</dbReference>
<dbReference type="EMBL" id="CM001220">
    <property type="protein sequence ID" value="KEH32433.1"/>
    <property type="molecule type" value="Genomic_DNA"/>
</dbReference>
<dbReference type="EMBL" id="PSQE01000026">
    <property type="protein sequence ID" value="RHN38409.1"/>
    <property type="molecule type" value="Genomic_DNA"/>
</dbReference>
<dbReference type="EMBL" id="PSQE01000004">
    <property type="protein sequence ID" value="RHN64564.1"/>
    <property type="status" value="ALT_SEQ"/>
    <property type="molecule type" value="Genomic_DNA"/>
</dbReference>
<dbReference type="RefSeq" id="XP_013458402.1">
    <property type="nucleotide sequence ID" value="XM_013602948.1"/>
</dbReference>
<dbReference type="SMR" id="A0A072UTP9"/>
<dbReference type="STRING" id="3880.A0A072UTP9"/>
<dbReference type="GlyCosmos" id="A0A072UTP9">
    <property type="glycosylation" value="3 sites, No reported glycans"/>
</dbReference>
<dbReference type="EnsemblPlants" id="rna50775">
    <property type="protein sequence ID" value="RHN38409.1"/>
    <property type="gene ID" value="gene50775"/>
</dbReference>
<dbReference type="GeneID" id="25494167"/>
<dbReference type="Gramene" id="rna50775">
    <property type="protein sequence ID" value="RHN38409.1"/>
    <property type="gene ID" value="gene50775"/>
</dbReference>
<dbReference type="KEGG" id="mtr:25494167"/>
<dbReference type="HOGENOM" id="CLU_012184_1_1_1"/>
<dbReference type="OrthoDB" id="10253408at2759"/>
<dbReference type="Proteomes" id="UP000002051">
    <property type="component" value="Chromosome 4"/>
</dbReference>
<dbReference type="Proteomes" id="UP000265566">
    <property type="component" value="Chromosome 4"/>
</dbReference>
<dbReference type="Proteomes" id="UP000265566">
    <property type="component" value="Unassembled WGS sequence"/>
</dbReference>
<dbReference type="ExpressionAtlas" id="A0A072UTP9">
    <property type="expression patterns" value="differential"/>
</dbReference>
<dbReference type="GO" id="GO:0005615">
    <property type="term" value="C:extracellular space"/>
    <property type="evidence" value="ECO:0000318"/>
    <property type="project" value="GO_Central"/>
</dbReference>
<dbReference type="GO" id="GO:0005764">
    <property type="term" value="C:lysosome"/>
    <property type="evidence" value="ECO:0000318"/>
    <property type="project" value="GO_Central"/>
</dbReference>
<dbReference type="GO" id="GO:0004197">
    <property type="term" value="F:cysteine-type endopeptidase activity"/>
    <property type="evidence" value="ECO:0000318"/>
    <property type="project" value="GO_Central"/>
</dbReference>
<dbReference type="GO" id="GO:0006955">
    <property type="term" value="P:immune response"/>
    <property type="evidence" value="ECO:0000318"/>
    <property type="project" value="GO_Central"/>
</dbReference>
<dbReference type="GO" id="GO:2001235">
    <property type="term" value="P:positive regulation of apoptotic signaling pathway"/>
    <property type="evidence" value="ECO:0000318"/>
    <property type="project" value="GO_Central"/>
</dbReference>
<dbReference type="GO" id="GO:0051603">
    <property type="term" value="P:proteolysis involved in protein catabolic process"/>
    <property type="evidence" value="ECO:0000318"/>
    <property type="project" value="GO_Central"/>
</dbReference>
<dbReference type="CDD" id="cd02248">
    <property type="entry name" value="Peptidase_C1A"/>
    <property type="match status" value="1"/>
</dbReference>
<dbReference type="FunFam" id="3.90.70.10:FF:000039">
    <property type="entry name" value="Cysteine proteinase 2, putative"/>
    <property type="match status" value="1"/>
</dbReference>
<dbReference type="Gene3D" id="3.90.70.10">
    <property type="entry name" value="Cysteine proteinases"/>
    <property type="match status" value="1"/>
</dbReference>
<dbReference type="InterPro" id="IPR038765">
    <property type="entry name" value="Papain-like_cys_pep_sf"/>
</dbReference>
<dbReference type="InterPro" id="IPR025661">
    <property type="entry name" value="Pept_asp_AS"/>
</dbReference>
<dbReference type="InterPro" id="IPR000169">
    <property type="entry name" value="Pept_cys_AS"/>
</dbReference>
<dbReference type="InterPro" id="IPR025660">
    <property type="entry name" value="Pept_his_AS"/>
</dbReference>
<dbReference type="InterPro" id="IPR013128">
    <property type="entry name" value="Peptidase_C1A"/>
</dbReference>
<dbReference type="InterPro" id="IPR000668">
    <property type="entry name" value="Peptidase_C1A_C"/>
</dbReference>
<dbReference type="InterPro" id="IPR039417">
    <property type="entry name" value="Peptidase_C1A_papain-like"/>
</dbReference>
<dbReference type="InterPro" id="IPR013201">
    <property type="entry name" value="Prot_inhib_I29"/>
</dbReference>
<dbReference type="PANTHER" id="PTHR12411">
    <property type="entry name" value="CYSTEINE PROTEASE FAMILY C1-RELATED"/>
    <property type="match status" value="1"/>
</dbReference>
<dbReference type="Pfam" id="PF08246">
    <property type="entry name" value="Inhibitor_I29"/>
    <property type="match status" value="1"/>
</dbReference>
<dbReference type="Pfam" id="PF00112">
    <property type="entry name" value="Peptidase_C1"/>
    <property type="match status" value="1"/>
</dbReference>
<dbReference type="PRINTS" id="PR00705">
    <property type="entry name" value="PAPAIN"/>
</dbReference>
<dbReference type="SMART" id="SM00848">
    <property type="entry name" value="Inhibitor_I29"/>
    <property type="match status" value="1"/>
</dbReference>
<dbReference type="SMART" id="SM00645">
    <property type="entry name" value="Pept_C1"/>
    <property type="match status" value="1"/>
</dbReference>
<dbReference type="SUPFAM" id="SSF54001">
    <property type="entry name" value="Cysteine proteinases"/>
    <property type="match status" value="1"/>
</dbReference>
<dbReference type="PROSITE" id="PS00640">
    <property type="entry name" value="THIOL_PROTEASE_ASN"/>
    <property type="match status" value="1"/>
</dbReference>
<dbReference type="PROSITE" id="PS00139">
    <property type="entry name" value="THIOL_PROTEASE_CYS"/>
    <property type="match status" value="1"/>
</dbReference>
<dbReference type="PROSITE" id="PS00639">
    <property type="entry name" value="THIOL_PROTEASE_HIS"/>
    <property type="match status" value="1"/>
</dbReference>
<sequence length="350" mass="38752">MAQWTLLIVFFCVATAAAGLSFHDSNPIRMVSDMEEQLLQVIGESRHAVSFARFANRYGKRYDTVDEMKRRFKIFSENLQLIKSTNKKRLGYTLGVNHFADWTWEEFRSHRLGAAQNCSATLKGNHRITDVVLPAEKDWRKEGIVSEVKDQGHCGSCWTFSTTGALESAYAQAFGKNISLSEQQLVDCAGAYNNFGCNGGLPSQAFEYIKYNGGLETEEAYPYTGQNGLCKFTSENVAVQVLGSVNITLGAEDELKHAVAFARPVSVAFQVVDDFRLYKKGVYTSTTCGSTPMDVNHAVLAVGYGIEDGVPYWLIKNSWGGEWGDHGYFKMEMGKNMCGVATCSSYPVVA</sequence>
<name>CATB_MEDTR</name>
<feature type="signal peptide" evidence="5">
    <location>
        <begin position="1"/>
        <end position="19"/>
    </location>
</feature>
<feature type="propeptide" id="PRO_0000450047" description="Activation peptide" evidence="3">
    <location>
        <begin position="20"/>
        <end position="113"/>
    </location>
</feature>
<feature type="peptide" id="PRO_0000450048" description="Cathepsin H mini chain" evidence="3">
    <location>
        <begin position="114"/>
        <end position="121"/>
    </location>
</feature>
<feature type="propeptide" id="PRO_0000450049" description="Removed in mature form" evidence="3">
    <location>
        <begin position="122"/>
        <end position="132"/>
    </location>
</feature>
<feature type="chain" id="PRO_5014483351" description="Cathepsin H">
    <location>
        <begin position="133"/>
        <end position="350"/>
    </location>
</feature>
<feature type="chain" id="PRO_0000450050" description="Cathepsin H heavy chain" evidence="3">
    <location>
        <begin position="133"/>
        <end position="308"/>
    </location>
</feature>
<feature type="chain" id="PRO_0000450051" description="Cathepsin H light chain" evidence="3">
    <location>
        <begin position="309"/>
        <end position="350"/>
    </location>
</feature>
<feature type="active site" evidence="7">
    <location>
        <position position="157"/>
    </location>
</feature>
<feature type="active site" evidence="8">
    <location>
        <position position="297"/>
    </location>
</feature>
<feature type="active site" evidence="9">
    <location>
        <position position="317"/>
    </location>
</feature>
<feature type="glycosylation site" description="N-linked (GlcNAc...) asparagine" evidence="6">
    <location>
        <position position="117"/>
    </location>
</feature>
<feature type="glycosylation site" description="N-linked (GlcNAc...) asparagine" evidence="6">
    <location>
        <position position="177"/>
    </location>
</feature>
<feature type="glycosylation site" description="N-linked (GlcNAc...) asparagine" evidence="6">
    <location>
        <position position="246"/>
    </location>
</feature>
<feature type="disulfide bond" evidence="1">
    <location>
        <begin position="154"/>
        <end position="197"/>
    </location>
</feature>
<feature type="disulfide bond" evidence="1">
    <location>
        <begin position="188"/>
        <end position="230"/>
    </location>
</feature>
<feature type="disulfide bond" description="Interchain (between heavy and light chains)" evidence="2">
    <location>
        <begin position="288"/>
        <end position="338"/>
    </location>
</feature>
<feature type="sequence conflict" description="In Ref. 1; AFK48845." evidence="12" ref="1">
    <location>
        <begin position="46"/>
        <end position="52"/>
    </location>
</feature>
<feature type="sequence conflict" description="In Ref. 1; AFK48845." evidence="12" ref="1">
    <original>A</original>
    <variation>V</variation>
    <location>
        <position position="220"/>
    </location>
</feature>
<feature type="sequence conflict" description="In Ref. 1; AFK48845." evidence="12" ref="1">
    <original>S</original>
    <variation>G</variation>
    <location>
        <position position="285"/>
    </location>
</feature>
<organism>
    <name type="scientific">Medicago truncatula</name>
    <name type="common">Barrel medic</name>
    <name type="synonym">Medicago tribuloides</name>
    <dbReference type="NCBI Taxonomy" id="3880"/>
    <lineage>
        <taxon>Eukaryota</taxon>
        <taxon>Viridiplantae</taxon>
        <taxon>Streptophyta</taxon>
        <taxon>Embryophyta</taxon>
        <taxon>Tracheophyta</taxon>
        <taxon>Spermatophyta</taxon>
        <taxon>Magnoliopsida</taxon>
        <taxon>eudicotyledons</taxon>
        <taxon>Gunneridae</taxon>
        <taxon>Pentapetalae</taxon>
        <taxon>rosids</taxon>
        <taxon>fabids</taxon>
        <taxon>Fabales</taxon>
        <taxon>Fabaceae</taxon>
        <taxon>Papilionoideae</taxon>
        <taxon>50 kb inversion clade</taxon>
        <taxon>NPAAA clade</taxon>
        <taxon>Hologalegina</taxon>
        <taxon>IRL clade</taxon>
        <taxon>Trifolieae</taxon>
        <taxon>Medicago</taxon>
    </lineage>
</organism>
<evidence type="ECO:0000250" key="1">
    <source>
        <dbReference type="UniProtKB" id="P07688"/>
    </source>
</evidence>
<evidence type="ECO:0000250" key="2">
    <source>
        <dbReference type="UniProtKB" id="P07711"/>
    </source>
</evidence>
<evidence type="ECO:0000250" key="3">
    <source>
        <dbReference type="UniProtKB" id="P09668"/>
    </source>
</evidence>
<evidence type="ECO:0000250" key="4">
    <source>
        <dbReference type="UniProtKB" id="Q8H166"/>
    </source>
</evidence>
<evidence type="ECO:0000255" key="5"/>
<evidence type="ECO:0000255" key="6">
    <source>
        <dbReference type="PROSITE-ProRule" id="PRU00498"/>
    </source>
</evidence>
<evidence type="ECO:0000255" key="7">
    <source>
        <dbReference type="PROSITE-ProRule" id="PRU10088"/>
    </source>
</evidence>
<evidence type="ECO:0000255" key="8">
    <source>
        <dbReference type="PROSITE-ProRule" id="PRU10089"/>
    </source>
</evidence>
<evidence type="ECO:0000255" key="9">
    <source>
        <dbReference type="PROSITE-ProRule" id="PRU10090"/>
    </source>
</evidence>
<evidence type="ECO:0000269" key="10">
    <source>
    </source>
</evidence>
<evidence type="ECO:0000303" key="11">
    <source>
    </source>
</evidence>
<evidence type="ECO:0000305" key="12"/>
<evidence type="ECO:0000312" key="13">
    <source>
        <dbReference type="EMBL" id="KEH32433.1"/>
    </source>
</evidence>
<evidence type="ECO:0000312" key="14">
    <source>
        <dbReference type="EMBL" id="RHN38409.1"/>
    </source>
</evidence>
<evidence type="ECO:0000312" key="15">
    <source>
        <dbReference type="EMBL" id="RHN64564.1"/>
    </source>
</evidence>
<reference key="1">
    <citation type="submission" date="2012-05" db="EMBL/GenBank/DDBJ databases">
        <authorList>
            <person name="Krishnakumar V."/>
            <person name="Cheung F."/>
            <person name="Xiao Y."/>
            <person name="Chan A."/>
            <person name="Moskal W.A."/>
            <person name="Town C.D."/>
        </authorList>
    </citation>
    <scope>NUCLEOTIDE SEQUENCE [MRNA]</scope>
</reference>
<reference key="2">
    <citation type="journal article" date="2011" name="Nature">
        <title>The Medicago genome provides insight into the evolution of rhizobial symbioses.</title>
        <authorList>
            <person name="Young N.D."/>
            <person name="Debelle F."/>
            <person name="Oldroyd G.E.D."/>
            <person name="Geurts R."/>
            <person name="Cannon S.B."/>
            <person name="Udvardi M.K."/>
            <person name="Benedito V.A."/>
            <person name="Mayer K.F.X."/>
            <person name="Gouzy J."/>
            <person name="Schoof H."/>
            <person name="Van de Peer Y."/>
            <person name="Proost S."/>
            <person name="Cook D.R."/>
            <person name="Meyers B.C."/>
            <person name="Spannagl M."/>
            <person name="Cheung F."/>
            <person name="De Mita S."/>
            <person name="Krishnakumar V."/>
            <person name="Gundlach H."/>
            <person name="Zhou S."/>
            <person name="Mudge J."/>
            <person name="Bharti A.K."/>
            <person name="Murray J.D."/>
            <person name="Naoumkina M.A."/>
            <person name="Rosen B."/>
            <person name="Silverstein K.A.T."/>
            <person name="Tang H."/>
            <person name="Rombauts S."/>
            <person name="Zhao P.X."/>
            <person name="Zhou P."/>
            <person name="Barbe V."/>
            <person name="Bardou P."/>
            <person name="Bechner M."/>
            <person name="Bellec A."/>
            <person name="Berger A."/>
            <person name="Berges H."/>
            <person name="Bidwell S."/>
            <person name="Bisseling T."/>
            <person name="Choisne N."/>
            <person name="Couloux A."/>
            <person name="Denny R."/>
            <person name="Deshpande S."/>
            <person name="Dai X."/>
            <person name="Doyle J.J."/>
            <person name="Dudez A.-M."/>
            <person name="Farmer A.D."/>
            <person name="Fouteau S."/>
            <person name="Franken C."/>
            <person name="Gibelin C."/>
            <person name="Gish J."/>
            <person name="Goldstein S."/>
            <person name="Gonzalez A.J."/>
            <person name="Green P.J."/>
            <person name="Hallab A."/>
            <person name="Hartog M."/>
            <person name="Hua A."/>
            <person name="Humphray S.J."/>
            <person name="Jeong D.-H."/>
            <person name="Jing Y."/>
            <person name="Jocker A."/>
            <person name="Kenton S.M."/>
            <person name="Kim D.-J."/>
            <person name="Klee K."/>
            <person name="Lai H."/>
            <person name="Lang C."/>
            <person name="Lin S."/>
            <person name="Macmil S.L."/>
            <person name="Magdelenat G."/>
            <person name="Matthews L."/>
            <person name="McCorrison J."/>
            <person name="Monaghan E.L."/>
            <person name="Mun J.-H."/>
            <person name="Najar F.Z."/>
            <person name="Nicholson C."/>
            <person name="Noirot C."/>
            <person name="O'Bleness M."/>
            <person name="Paule C.R."/>
            <person name="Poulain J."/>
            <person name="Prion F."/>
            <person name="Qin B."/>
            <person name="Qu C."/>
            <person name="Retzel E.F."/>
            <person name="Riddle C."/>
            <person name="Sallet E."/>
            <person name="Samain S."/>
            <person name="Samson N."/>
            <person name="Sanders I."/>
            <person name="Saurat O."/>
            <person name="Scarpelli C."/>
            <person name="Schiex T."/>
            <person name="Segurens B."/>
            <person name="Severin A.J."/>
            <person name="Sherrier D.J."/>
            <person name="Shi R."/>
            <person name="Sims S."/>
            <person name="Singer S.R."/>
            <person name="Sinharoy S."/>
            <person name="Sterck L."/>
            <person name="Viollet A."/>
            <person name="Wang B.-B."/>
            <person name="Wang K."/>
            <person name="Wang M."/>
            <person name="Wang X."/>
            <person name="Warfsmann J."/>
            <person name="Weissenbach J."/>
            <person name="White D.D."/>
            <person name="White J.D."/>
            <person name="Wiley G.B."/>
            <person name="Wincker P."/>
            <person name="Xing Y."/>
            <person name="Yang L."/>
            <person name="Yao Z."/>
            <person name="Ying F."/>
            <person name="Zhai J."/>
            <person name="Zhou L."/>
            <person name="Zuber A."/>
            <person name="Denarie J."/>
            <person name="Dixon R.A."/>
            <person name="May G.D."/>
            <person name="Schwartz D.C."/>
            <person name="Rogers J."/>
            <person name="Quetier F."/>
            <person name="Town C.D."/>
            <person name="Roe B.A."/>
        </authorList>
    </citation>
    <scope>NUCLEOTIDE SEQUENCE [LARGE SCALE GENOMIC DNA]</scope>
    <source>
        <strain>cv. Jemalong A17</strain>
    </source>
</reference>
<reference key="3">
    <citation type="journal article" date="2014" name="BMC Genomics">
        <title>An improved genome release (version Mt4.0) for the model legume Medicago truncatula.</title>
        <authorList>
            <person name="Tang H."/>
            <person name="Krishnakumar V."/>
            <person name="Bidwell S."/>
            <person name="Rosen B."/>
            <person name="Chan A."/>
            <person name="Zhou S."/>
            <person name="Gentzbittel L."/>
            <person name="Childs K.L."/>
            <person name="Yandell M."/>
            <person name="Gundlach H."/>
            <person name="Mayer K.F."/>
            <person name="Schwartz D.C."/>
            <person name="Town C.D."/>
        </authorList>
    </citation>
    <scope>GENOME REANNOTATION</scope>
    <source>
        <strain>cv. Jemalong A17</strain>
    </source>
</reference>
<reference key="4">
    <citation type="journal article" date="2018" name="Nat. Plants">
        <title>Whole-genome landscape of Medicago truncatula symbiotic genes.</title>
        <authorList>
            <person name="Pecrix Y."/>
            <person name="Staton S.E."/>
            <person name="Sallet E."/>
            <person name="Lelandais-Briere C."/>
            <person name="Moreau S."/>
            <person name="Carrere S."/>
            <person name="Blein T."/>
            <person name="Jardinaud M.F."/>
            <person name="Latrasse D."/>
            <person name="Zouine M."/>
            <person name="Zahm M."/>
            <person name="Kreplak J."/>
            <person name="Mayjonade B."/>
            <person name="Satge C."/>
            <person name="Perez M."/>
            <person name="Cauet S."/>
            <person name="Marande W."/>
            <person name="Chantry-Darmon C."/>
            <person name="Lopez-Roques C."/>
            <person name="Bouchez O."/>
            <person name="Berard A."/>
            <person name="Debelle F."/>
            <person name="Munos S."/>
            <person name="Bendahmane A."/>
            <person name="Berges H."/>
            <person name="Niebel A."/>
            <person name="Buitink J."/>
            <person name="Frugier F."/>
            <person name="Benhamed M."/>
            <person name="Crespi M."/>
            <person name="Gouzy J."/>
            <person name="Gamas P."/>
        </authorList>
    </citation>
    <scope>NUCLEOTIDE SEQUENCE [LARGE SCALE GENOMIC DNA]</scope>
    <source>
        <strain>cv. Jemalong A17</strain>
    </source>
</reference>
<reference key="5">
    <citation type="journal article" date="2013" name="Plant J.">
        <title>A tandem Kunitz protease inhibitor (KPI106)-serine carboxypeptidase (SCP1) controls mycorrhiza establishment and arbuscule development in Medicago truncatula.</title>
        <authorList>
            <person name="Rech S.S."/>
            <person name="Heidt S."/>
            <person name="Requena N."/>
        </authorList>
    </citation>
    <scope>INTERACTION WITH KPI104 AND KPI106</scope>
</reference>
<accession>A0A072UTP9</accession>
<accession>A0A396IJR2</accession>
<accession>I3T8K3</accession>
<keyword id="KW-1015">Disulfide bond</keyword>
<keyword id="KW-0325">Glycoprotein</keyword>
<keyword id="KW-0378">Hydrolase</keyword>
<keyword id="KW-0458">Lysosome</keyword>
<keyword id="KW-0645">Protease</keyword>
<keyword id="KW-1185">Reference proteome</keyword>
<keyword id="KW-0732">Signal</keyword>
<keyword id="KW-0788">Thiol protease</keyword>
<keyword id="KW-0926">Vacuole</keyword>
<keyword id="KW-0865">Zymogen</keyword>
<proteinExistence type="evidence at protein level"/>
<gene>
    <name evidence="11" type="primary">CP</name>
    <name evidence="13" type="ordered locus">MTR_4g125300</name>
    <name evidence="14" type="ORF">MtrunA17_Chr0c27g0493921</name>
    <name evidence="15" type="ORF">MtrunA17_Chr4g0070441</name>
</gene>